<sequence>MDSAAAERPSSYAVNFPPLLPAPAPAVAGAMGVANHKSVLCMKWREGRCHNGVACRYAHGEEDQRIVPEMRVGGGGTSMHARSSPPRDGASSGSTASIAMAACRIEEQRHGRGGESFILPRSRRKRQALGSGSARSTAPTPPRAHTTPPCSRSVAAPRASTSPLRPSPVPPPATLHSAADVQRSVARALEDFEQRESSSSVFPLAIDIVAEDAMTATSEPSATSDDDAITTTTSSSTTDADELDAAVAAPPK</sequence>
<name>C3H58_ORYSJ</name>
<evidence type="ECO:0000255" key="1">
    <source>
        <dbReference type="PROSITE-ProRule" id="PRU00723"/>
    </source>
</evidence>
<evidence type="ECO:0000256" key="2">
    <source>
        <dbReference type="SAM" id="MobiDB-lite"/>
    </source>
</evidence>
<keyword id="KW-0238">DNA-binding</keyword>
<keyword id="KW-0479">Metal-binding</keyword>
<keyword id="KW-1185">Reference proteome</keyword>
<keyword id="KW-0862">Zinc</keyword>
<keyword id="KW-0863">Zinc-finger</keyword>
<protein>
    <recommendedName>
        <fullName>Putative zinc finger CCCH domain-containing protein 58</fullName>
        <shortName>OsC3H58</shortName>
    </recommendedName>
</protein>
<organism>
    <name type="scientific">Oryza sativa subsp. japonica</name>
    <name type="common">Rice</name>
    <dbReference type="NCBI Taxonomy" id="39947"/>
    <lineage>
        <taxon>Eukaryota</taxon>
        <taxon>Viridiplantae</taxon>
        <taxon>Streptophyta</taxon>
        <taxon>Embryophyta</taxon>
        <taxon>Tracheophyta</taxon>
        <taxon>Spermatophyta</taxon>
        <taxon>Magnoliopsida</taxon>
        <taxon>Liliopsida</taxon>
        <taxon>Poales</taxon>
        <taxon>Poaceae</taxon>
        <taxon>BOP clade</taxon>
        <taxon>Oryzoideae</taxon>
        <taxon>Oryzeae</taxon>
        <taxon>Oryzinae</taxon>
        <taxon>Oryza</taxon>
        <taxon>Oryza sativa</taxon>
    </lineage>
</organism>
<gene>
    <name type="ordered locus">Os09g0305900</name>
    <name type="ordered locus">LOC_Os09g13530</name>
    <name type="ORF">OSJNBa0064I23.11</name>
</gene>
<reference key="1">
    <citation type="journal article" date="2005" name="Nature">
        <title>The map-based sequence of the rice genome.</title>
        <authorList>
            <consortium name="International rice genome sequencing project (IRGSP)"/>
        </authorList>
    </citation>
    <scope>NUCLEOTIDE SEQUENCE [LARGE SCALE GENOMIC DNA]</scope>
    <source>
        <strain>cv. Nipponbare</strain>
    </source>
</reference>
<reference key="2">
    <citation type="journal article" date="2013" name="Rice">
        <title>Improvement of the Oryza sativa Nipponbare reference genome using next generation sequence and optical map data.</title>
        <authorList>
            <person name="Kawahara Y."/>
            <person name="de la Bastide M."/>
            <person name="Hamilton J.P."/>
            <person name="Kanamori H."/>
            <person name="McCombie W.R."/>
            <person name="Ouyang S."/>
            <person name="Schwartz D.C."/>
            <person name="Tanaka T."/>
            <person name="Wu J."/>
            <person name="Zhou S."/>
            <person name="Childs K.L."/>
            <person name="Davidson R.M."/>
            <person name="Lin H."/>
            <person name="Quesada-Ocampo L."/>
            <person name="Vaillancourt B."/>
            <person name="Sakai H."/>
            <person name="Lee S.S."/>
            <person name="Kim J."/>
            <person name="Numa H."/>
            <person name="Itoh T."/>
            <person name="Buell C.R."/>
            <person name="Matsumoto T."/>
        </authorList>
    </citation>
    <scope>GENOME REANNOTATION</scope>
    <source>
        <strain>cv. Nipponbare</strain>
    </source>
</reference>
<reference key="3">
    <citation type="journal article" date="2008" name="BMC Genomics">
        <title>Genome-wide analysis of CCCH zinc finger family in Arabidopsis and rice.</title>
        <authorList>
            <person name="Wang D."/>
            <person name="Guo Y."/>
            <person name="Wu C."/>
            <person name="Yang G."/>
            <person name="Li Y."/>
            <person name="Zheng C."/>
        </authorList>
    </citation>
    <scope>NOMENCLATURE</scope>
</reference>
<dbReference type="EMBL" id="AP005912">
    <property type="protein sequence ID" value="BAD36500.1"/>
    <property type="molecule type" value="Genomic_DNA"/>
</dbReference>
<dbReference type="EMBL" id="AP014965">
    <property type="protein sequence ID" value="BAT07350.1"/>
    <property type="molecule type" value="Genomic_DNA"/>
</dbReference>
<dbReference type="RefSeq" id="XP_015611102.1">
    <property type="nucleotide sequence ID" value="XM_015755616.1"/>
</dbReference>
<dbReference type="STRING" id="39947.Q69KP0"/>
<dbReference type="PaxDb" id="39947-Q69KP0"/>
<dbReference type="EnsemblPlants" id="Os09t0305900-00">
    <property type="protein sequence ID" value="Os09t0305900-00"/>
    <property type="gene ID" value="Os09g0305900"/>
</dbReference>
<dbReference type="Gramene" id="Os09t0305900-00">
    <property type="protein sequence ID" value="Os09t0305900-00"/>
    <property type="gene ID" value="Os09g0305900"/>
</dbReference>
<dbReference type="HOGENOM" id="CLU_1104261_0_0_1"/>
<dbReference type="InParanoid" id="Q69KP0"/>
<dbReference type="OrthoDB" id="544074at2759"/>
<dbReference type="Proteomes" id="UP000000763">
    <property type="component" value="Chromosome 9"/>
</dbReference>
<dbReference type="Proteomes" id="UP000059680">
    <property type="component" value="Chromosome 9"/>
</dbReference>
<dbReference type="GO" id="GO:0003677">
    <property type="term" value="F:DNA binding"/>
    <property type="evidence" value="ECO:0007669"/>
    <property type="project" value="UniProtKB-KW"/>
</dbReference>
<dbReference type="GO" id="GO:0008270">
    <property type="term" value="F:zinc ion binding"/>
    <property type="evidence" value="ECO:0007669"/>
    <property type="project" value="UniProtKB-KW"/>
</dbReference>
<dbReference type="Gene3D" id="4.10.1000.10">
    <property type="entry name" value="Zinc finger, CCCH-type"/>
    <property type="match status" value="1"/>
</dbReference>
<dbReference type="InterPro" id="IPR000571">
    <property type="entry name" value="Znf_CCCH"/>
</dbReference>
<dbReference type="InterPro" id="IPR036855">
    <property type="entry name" value="Znf_CCCH_sf"/>
</dbReference>
<dbReference type="Pfam" id="PF00642">
    <property type="entry name" value="zf-CCCH"/>
    <property type="match status" value="1"/>
</dbReference>
<dbReference type="SMART" id="SM00356">
    <property type="entry name" value="ZnF_C3H1"/>
    <property type="match status" value="1"/>
</dbReference>
<dbReference type="SUPFAM" id="SSF90229">
    <property type="entry name" value="CCCH zinc finger"/>
    <property type="match status" value="1"/>
</dbReference>
<dbReference type="PROSITE" id="PS50103">
    <property type="entry name" value="ZF_C3H1"/>
    <property type="match status" value="1"/>
</dbReference>
<proteinExistence type="predicted"/>
<feature type="chain" id="PRO_0000346851" description="Putative zinc finger CCCH domain-containing protein 58">
    <location>
        <begin position="1"/>
        <end position="252"/>
    </location>
</feature>
<feature type="zinc finger region" description="C3H1-type" evidence="1">
    <location>
        <begin position="35"/>
        <end position="62"/>
    </location>
</feature>
<feature type="region of interest" description="Disordered" evidence="2">
    <location>
        <begin position="71"/>
        <end position="95"/>
    </location>
</feature>
<feature type="region of interest" description="Disordered" evidence="2">
    <location>
        <begin position="109"/>
        <end position="180"/>
    </location>
</feature>
<feature type="region of interest" description="Disordered" evidence="2">
    <location>
        <begin position="215"/>
        <end position="252"/>
    </location>
</feature>
<feature type="compositionally biased region" description="Low complexity" evidence="2">
    <location>
        <begin position="133"/>
        <end position="149"/>
    </location>
</feature>
<feature type="compositionally biased region" description="Low complexity" evidence="2">
    <location>
        <begin position="229"/>
        <end position="238"/>
    </location>
</feature>
<accession>Q69KP0</accession>
<accession>A0A0P0XJU1</accession>